<proteinExistence type="inferred from homology"/>
<comment type="similarity">
    <text evidence="1">Belongs to the Smg family.</text>
</comment>
<sequence>MFDVLMYLFETYIHNEAELRVDQDRLERDLTDAGFDREDIYNALLWLEKLADYQDGLAEPMQLASDPLSMRIYTVEECERLDASCRGFLLFLEQIQVLNLETREMVIERVLALDTAEFDLEDLKWVILMVLFNIPGCENAYQQMEELLFEVNEGMLH</sequence>
<gene>
    <name evidence="1" type="primary">smg</name>
    <name type="ordered locus">STY4393</name>
    <name type="ordered locus">t4100</name>
</gene>
<dbReference type="EMBL" id="AL513382">
    <property type="protein sequence ID" value="CAD09181.1"/>
    <property type="molecule type" value="Genomic_DNA"/>
</dbReference>
<dbReference type="EMBL" id="AE014613">
    <property type="protein sequence ID" value="AAO71567.1"/>
    <property type="molecule type" value="Genomic_DNA"/>
</dbReference>
<dbReference type="RefSeq" id="NP_458495.1">
    <property type="nucleotide sequence ID" value="NC_003198.1"/>
</dbReference>
<dbReference type="RefSeq" id="WP_000460663.1">
    <property type="nucleotide sequence ID" value="NZ_WSUR01000046.1"/>
</dbReference>
<dbReference type="SMR" id="P66823"/>
<dbReference type="STRING" id="220341.gene:17588221"/>
<dbReference type="KEGG" id="stt:t4100"/>
<dbReference type="KEGG" id="sty:STY4393"/>
<dbReference type="PATRIC" id="fig|220341.7.peg.4489"/>
<dbReference type="eggNOG" id="COG2922">
    <property type="taxonomic scope" value="Bacteria"/>
</dbReference>
<dbReference type="HOGENOM" id="CLU_133242_0_0_6"/>
<dbReference type="OMA" id="DLKWVVM"/>
<dbReference type="OrthoDB" id="9788984at2"/>
<dbReference type="Proteomes" id="UP000000541">
    <property type="component" value="Chromosome"/>
</dbReference>
<dbReference type="Proteomes" id="UP000002670">
    <property type="component" value="Chromosome"/>
</dbReference>
<dbReference type="HAMAP" id="MF_00598">
    <property type="entry name" value="Smg"/>
    <property type="match status" value="1"/>
</dbReference>
<dbReference type="InterPro" id="IPR007456">
    <property type="entry name" value="Smg"/>
</dbReference>
<dbReference type="NCBIfam" id="NF002897">
    <property type="entry name" value="PRK03430.1"/>
    <property type="match status" value="1"/>
</dbReference>
<dbReference type="PANTHER" id="PTHR38692">
    <property type="entry name" value="PROTEIN SMG"/>
    <property type="match status" value="1"/>
</dbReference>
<dbReference type="PANTHER" id="PTHR38692:SF1">
    <property type="entry name" value="PROTEIN SMG"/>
    <property type="match status" value="1"/>
</dbReference>
<dbReference type="Pfam" id="PF04361">
    <property type="entry name" value="DUF494"/>
    <property type="match status" value="1"/>
</dbReference>
<name>SMG_SALTI</name>
<reference key="1">
    <citation type="journal article" date="2001" name="Nature">
        <title>Complete genome sequence of a multiple drug resistant Salmonella enterica serovar Typhi CT18.</title>
        <authorList>
            <person name="Parkhill J."/>
            <person name="Dougan G."/>
            <person name="James K.D."/>
            <person name="Thomson N.R."/>
            <person name="Pickard D."/>
            <person name="Wain J."/>
            <person name="Churcher C.M."/>
            <person name="Mungall K.L."/>
            <person name="Bentley S.D."/>
            <person name="Holden M.T.G."/>
            <person name="Sebaihia M."/>
            <person name="Baker S."/>
            <person name="Basham D."/>
            <person name="Brooks K."/>
            <person name="Chillingworth T."/>
            <person name="Connerton P."/>
            <person name="Cronin A."/>
            <person name="Davis P."/>
            <person name="Davies R.M."/>
            <person name="Dowd L."/>
            <person name="White N."/>
            <person name="Farrar J."/>
            <person name="Feltwell T."/>
            <person name="Hamlin N."/>
            <person name="Haque A."/>
            <person name="Hien T.T."/>
            <person name="Holroyd S."/>
            <person name="Jagels K."/>
            <person name="Krogh A."/>
            <person name="Larsen T.S."/>
            <person name="Leather S."/>
            <person name="Moule S."/>
            <person name="O'Gaora P."/>
            <person name="Parry C."/>
            <person name="Quail M.A."/>
            <person name="Rutherford K.M."/>
            <person name="Simmonds M."/>
            <person name="Skelton J."/>
            <person name="Stevens K."/>
            <person name="Whitehead S."/>
            <person name="Barrell B.G."/>
        </authorList>
    </citation>
    <scope>NUCLEOTIDE SEQUENCE [LARGE SCALE GENOMIC DNA]</scope>
    <source>
        <strain>CT18</strain>
    </source>
</reference>
<reference key="2">
    <citation type="journal article" date="2003" name="J. Bacteriol.">
        <title>Comparative genomics of Salmonella enterica serovar Typhi strains Ty2 and CT18.</title>
        <authorList>
            <person name="Deng W."/>
            <person name="Liou S.-R."/>
            <person name="Plunkett G. III"/>
            <person name="Mayhew G.F."/>
            <person name="Rose D.J."/>
            <person name="Burland V."/>
            <person name="Kodoyianni V."/>
            <person name="Schwartz D.C."/>
            <person name="Blattner F.R."/>
        </authorList>
    </citation>
    <scope>NUCLEOTIDE SEQUENCE [LARGE SCALE GENOMIC DNA]</scope>
    <source>
        <strain>ATCC 700931 / Ty2</strain>
    </source>
</reference>
<protein>
    <recommendedName>
        <fullName evidence="1">Protein Smg</fullName>
    </recommendedName>
</protein>
<feature type="chain" id="PRO_0000209179" description="Protein Smg">
    <location>
        <begin position="1"/>
        <end position="157"/>
    </location>
</feature>
<accession>P66823</accession>
<accession>Q8XFK8</accession>
<organism>
    <name type="scientific">Salmonella typhi</name>
    <dbReference type="NCBI Taxonomy" id="90370"/>
    <lineage>
        <taxon>Bacteria</taxon>
        <taxon>Pseudomonadati</taxon>
        <taxon>Pseudomonadota</taxon>
        <taxon>Gammaproteobacteria</taxon>
        <taxon>Enterobacterales</taxon>
        <taxon>Enterobacteriaceae</taxon>
        <taxon>Salmonella</taxon>
    </lineage>
</organism>
<evidence type="ECO:0000255" key="1">
    <source>
        <dbReference type="HAMAP-Rule" id="MF_00598"/>
    </source>
</evidence>